<accession>B2K534</accession>
<evidence type="ECO:0000255" key="1">
    <source>
        <dbReference type="HAMAP-Rule" id="MF_00156"/>
    </source>
</evidence>
<gene>
    <name evidence="1" type="primary">panB</name>
    <name type="ordered locus">YPTS_0761</name>
</gene>
<sequence length="265" mass="28667">MKTTTMSQLRQWKQEKRKFATLTAYDASFAQLFAEQGIQVLLVGDSLGMTLQGFDSTLPVTVADVAYHTRAVRRGAPHCLLLADMPFMSYATPELAFTHAAELMRAGANMVKLEGGSWLCDTIRMLAERAVPVCGHLGLTPQSVNIFGGYKVQGREEVAANQLLQDAIALEQAGAQLLVLECVPVELAQRVTEELTIPVIGIGAGNVTDGQILVMHDALGITGGHTPKFSKNFLAHSAGDIRAAIKLYIEEVEGGIYPAEEHTFQ</sequence>
<feature type="chain" id="PRO_1000097023" description="3-methyl-2-oxobutanoate hydroxymethyltransferase">
    <location>
        <begin position="1"/>
        <end position="265"/>
    </location>
</feature>
<feature type="active site" description="Proton acceptor" evidence="1">
    <location>
        <position position="181"/>
    </location>
</feature>
<feature type="binding site" evidence="1">
    <location>
        <begin position="45"/>
        <end position="46"/>
    </location>
    <ligand>
        <name>3-methyl-2-oxobutanoate</name>
        <dbReference type="ChEBI" id="CHEBI:11851"/>
    </ligand>
</feature>
<feature type="binding site" evidence="1">
    <location>
        <position position="45"/>
    </location>
    <ligand>
        <name>Mg(2+)</name>
        <dbReference type="ChEBI" id="CHEBI:18420"/>
    </ligand>
</feature>
<feature type="binding site" evidence="1">
    <location>
        <position position="84"/>
    </location>
    <ligand>
        <name>3-methyl-2-oxobutanoate</name>
        <dbReference type="ChEBI" id="CHEBI:11851"/>
    </ligand>
</feature>
<feature type="binding site" evidence="1">
    <location>
        <position position="84"/>
    </location>
    <ligand>
        <name>Mg(2+)</name>
        <dbReference type="ChEBI" id="CHEBI:18420"/>
    </ligand>
</feature>
<feature type="binding site" evidence="1">
    <location>
        <position position="112"/>
    </location>
    <ligand>
        <name>3-methyl-2-oxobutanoate</name>
        <dbReference type="ChEBI" id="CHEBI:11851"/>
    </ligand>
</feature>
<feature type="binding site" evidence="1">
    <location>
        <position position="114"/>
    </location>
    <ligand>
        <name>Mg(2+)</name>
        <dbReference type="ChEBI" id="CHEBI:18420"/>
    </ligand>
</feature>
<organism>
    <name type="scientific">Yersinia pseudotuberculosis serotype IB (strain PB1/+)</name>
    <dbReference type="NCBI Taxonomy" id="502801"/>
    <lineage>
        <taxon>Bacteria</taxon>
        <taxon>Pseudomonadati</taxon>
        <taxon>Pseudomonadota</taxon>
        <taxon>Gammaproteobacteria</taxon>
        <taxon>Enterobacterales</taxon>
        <taxon>Yersiniaceae</taxon>
        <taxon>Yersinia</taxon>
    </lineage>
</organism>
<dbReference type="EC" id="2.1.2.11" evidence="1"/>
<dbReference type="EMBL" id="CP001048">
    <property type="protein sequence ID" value="ACC87745.1"/>
    <property type="molecule type" value="Genomic_DNA"/>
</dbReference>
<dbReference type="RefSeq" id="WP_012304571.1">
    <property type="nucleotide sequence ID" value="NZ_CP009780.1"/>
</dbReference>
<dbReference type="SMR" id="B2K534"/>
<dbReference type="GeneID" id="49787265"/>
<dbReference type="KEGG" id="ypb:YPTS_0761"/>
<dbReference type="PATRIC" id="fig|502801.10.peg.92"/>
<dbReference type="UniPathway" id="UPA00028">
    <property type="reaction ID" value="UER00003"/>
</dbReference>
<dbReference type="GO" id="GO:0005737">
    <property type="term" value="C:cytoplasm"/>
    <property type="evidence" value="ECO:0007669"/>
    <property type="project" value="UniProtKB-SubCell"/>
</dbReference>
<dbReference type="GO" id="GO:0003864">
    <property type="term" value="F:3-methyl-2-oxobutanoate hydroxymethyltransferase activity"/>
    <property type="evidence" value="ECO:0007669"/>
    <property type="project" value="UniProtKB-UniRule"/>
</dbReference>
<dbReference type="GO" id="GO:0000287">
    <property type="term" value="F:magnesium ion binding"/>
    <property type="evidence" value="ECO:0007669"/>
    <property type="project" value="TreeGrafter"/>
</dbReference>
<dbReference type="GO" id="GO:0015940">
    <property type="term" value="P:pantothenate biosynthetic process"/>
    <property type="evidence" value="ECO:0007669"/>
    <property type="project" value="UniProtKB-UniRule"/>
</dbReference>
<dbReference type="CDD" id="cd06557">
    <property type="entry name" value="KPHMT-like"/>
    <property type="match status" value="1"/>
</dbReference>
<dbReference type="FunFam" id="3.20.20.60:FF:000003">
    <property type="entry name" value="3-methyl-2-oxobutanoate hydroxymethyltransferase"/>
    <property type="match status" value="1"/>
</dbReference>
<dbReference type="Gene3D" id="3.20.20.60">
    <property type="entry name" value="Phosphoenolpyruvate-binding domains"/>
    <property type="match status" value="1"/>
</dbReference>
<dbReference type="HAMAP" id="MF_00156">
    <property type="entry name" value="PanB"/>
    <property type="match status" value="1"/>
</dbReference>
<dbReference type="InterPro" id="IPR003700">
    <property type="entry name" value="Pantoate_hydroxy_MeTrfase"/>
</dbReference>
<dbReference type="InterPro" id="IPR015813">
    <property type="entry name" value="Pyrv/PenolPyrv_kinase-like_dom"/>
</dbReference>
<dbReference type="InterPro" id="IPR040442">
    <property type="entry name" value="Pyrv_kinase-like_dom_sf"/>
</dbReference>
<dbReference type="NCBIfam" id="TIGR00222">
    <property type="entry name" value="panB"/>
    <property type="match status" value="1"/>
</dbReference>
<dbReference type="NCBIfam" id="NF001452">
    <property type="entry name" value="PRK00311.1"/>
    <property type="match status" value="1"/>
</dbReference>
<dbReference type="PANTHER" id="PTHR20881">
    <property type="entry name" value="3-METHYL-2-OXOBUTANOATE HYDROXYMETHYLTRANSFERASE"/>
    <property type="match status" value="1"/>
</dbReference>
<dbReference type="PANTHER" id="PTHR20881:SF0">
    <property type="entry name" value="3-METHYL-2-OXOBUTANOATE HYDROXYMETHYLTRANSFERASE"/>
    <property type="match status" value="1"/>
</dbReference>
<dbReference type="Pfam" id="PF02548">
    <property type="entry name" value="Pantoate_transf"/>
    <property type="match status" value="1"/>
</dbReference>
<dbReference type="PIRSF" id="PIRSF000388">
    <property type="entry name" value="Pantoate_hydroxy_MeTrfase"/>
    <property type="match status" value="1"/>
</dbReference>
<dbReference type="SUPFAM" id="SSF51621">
    <property type="entry name" value="Phosphoenolpyruvate/pyruvate domain"/>
    <property type="match status" value="1"/>
</dbReference>
<proteinExistence type="inferred from homology"/>
<protein>
    <recommendedName>
        <fullName evidence="1">3-methyl-2-oxobutanoate hydroxymethyltransferase</fullName>
        <ecNumber evidence="1">2.1.2.11</ecNumber>
    </recommendedName>
    <alternativeName>
        <fullName evidence="1">Ketopantoate hydroxymethyltransferase</fullName>
        <shortName evidence="1">KPHMT</shortName>
    </alternativeName>
</protein>
<comment type="function">
    <text evidence="1">Catalyzes the reversible reaction in which hydroxymethyl group from 5,10-methylenetetrahydrofolate is transferred onto alpha-ketoisovalerate to form ketopantoate.</text>
</comment>
<comment type="catalytic activity">
    <reaction evidence="1">
        <text>3-methyl-2-oxobutanoate + (6R)-5,10-methylene-5,6,7,8-tetrahydrofolate + H2O = 2-dehydropantoate + (6S)-5,6,7,8-tetrahydrofolate</text>
        <dbReference type="Rhea" id="RHEA:11824"/>
        <dbReference type="ChEBI" id="CHEBI:11561"/>
        <dbReference type="ChEBI" id="CHEBI:11851"/>
        <dbReference type="ChEBI" id="CHEBI:15377"/>
        <dbReference type="ChEBI" id="CHEBI:15636"/>
        <dbReference type="ChEBI" id="CHEBI:57453"/>
        <dbReference type="EC" id="2.1.2.11"/>
    </reaction>
</comment>
<comment type="cofactor">
    <cofactor evidence="1">
        <name>Mg(2+)</name>
        <dbReference type="ChEBI" id="CHEBI:18420"/>
    </cofactor>
    <text evidence="1">Binds 1 Mg(2+) ion per subunit.</text>
</comment>
<comment type="pathway">
    <text evidence="1">Cofactor biosynthesis; (R)-pantothenate biosynthesis; (R)-pantoate from 3-methyl-2-oxobutanoate: step 1/2.</text>
</comment>
<comment type="subunit">
    <text evidence="1">Homodecamer; pentamer of dimers.</text>
</comment>
<comment type="subcellular location">
    <subcellularLocation>
        <location evidence="1">Cytoplasm</location>
    </subcellularLocation>
</comment>
<comment type="similarity">
    <text evidence="1">Belongs to the PanB family.</text>
</comment>
<reference key="1">
    <citation type="submission" date="2008-04" db="EMBL/GenBank/DDBJ databases">
        <title>Complete sequence of Yersinia pseudotuberculosis PB1/+.</title>
        <authorList>
            <person name="Copeland A."/>
            <person name="Lucas S."/>
            <person name="Lapidus A."/>
            <person name="Glavina del Rio T."/>
            <person name="Dalin E."/>
            <person name="Tice H."/>
            <person name="Bruce D."/>
            <person name="Goodwin L."/>
            <person name="Pitluck S."/>
            <person name="Munk A.C."/>
            <person name="Brettin T."/>
            <person name="Detter J.C."/>
            <person name="Han C."/>
            <person name="Tapia R."/>
            <person name="Schmutz J."/>
            <person name="Larimer F."/>
            <person name="Land M."/>
            <person name="Hauser L."/>
            <person name="Challacombe J.F."/>
            <person name="Green L."/>
            <person name="Lindler L.E."/>
            <person name="Nikolich M.P."/>
            <person name="Richardson P."/>
        </authorList>
    </citation>
    <scope>NUCLEOTIDE SEQUENCE [LARGE SCALE GENOMIC DNA]</scope>
    <source>
        <strain>PB1/+</strain>
    </source>
</reference>
<name>PANB_YERPB</name>
<keyword id="KW-0963">Cytoplasm</keyword>
<keyword id="KW-0460">Magnesium</keyword>
<keyword id="KW-0479">Metal-binding</keyword>
<keyword id="KW-0566">Pantothenate biosynthesis</keyword>
<keyword id="KW-0808">Transferase</keyword>